<evidence type="ECO:0000255" key="1">
    <source>
        <dbReference type="HAMAP-Rule" id="MF_00544"/>
    </source>
</evidence>
<proteinExistence type="inferred from homology"/>
<dbReference type="EC" id="4.1.99.1" evidence="1"/>
<dbReference type="EMBL" id="CP000948">
    <property type="protein sequence ID" value="ACB04752.1"/>
    <property type="molecule type" value="Genomic_DNA"/>
</dbReference>
<dbReference type="RefSeq" id="WP_001295247.1">
    <property type="nucleotide sequence ID" value="NC_010473.1"/>
</dbReference>
<dbReference type="SMR" id="B1X9T7"/>
<dbReference type="GeneID" id="75205423"/>
<dbReference type="KEGG" id="ecd:ECDH10B_3895"/>
<dbReference type="HOGENOM" id="CLU_047223_0_0_6"/>
<dbReference type="UniPathway" id="UPA00332">
    <property type="reaction ID" value="UER00452"/>
</dbReference>
<dbReference type="GO" id="GO:0009034">
    <property type="term" value="F:tryptophanase activity"/>
    <property type="evidence" value="ECO:0007669"/>
    <property type="project" value="UniProtKB-UniRule"/>
</dbReference>
<dbReference type="FunFam" id="3.40.640.10:FF:000039">
    <property type="entry name" value="Tryptophanase"/>
    <property type="match status" value="1"/>
</dbReference>
<dbReference type="Gene3D" id="3.90.1150.10">
    <property type="entry name" value="Aspartate Aminotransferase, domain 1"/>
    <property type="match status" value="1"/>
</dbReference>
<dbReference type="Gene3D" id="3.40.640.10">
    <property type="entry name" value="Type I PLP-dependent aspartate aminotransferase-like (Major domain)"/>
    <property type="match status" value="1"/>
</dbReference>
<dbReference type="HAMAP" id="MF_00544">
    <property type="entry name" value="Tryptophanase"/>
    <property type="match status" value="1"/>
</dbReference>
<dbReference type="InterPro" id="IPR001597">
    <property type="entry name" value="ArAA_b-elim_lyase/Thr_aldolase"/>
</dbReference>
<dbReference type="InterPro" id="IPR011166">
    <property type="entry name" value="Beta-eliminating_lyase"/>
</dbReference>
<dbReference type="InterPro" id="IPR015424">
    <property type="entry name" value="PyrdxlP-dep_Trfase"/>
</dbReference>
<dbReference type="InterPro" id="IPR015421">
    <property type="entry name" value="PyrdxlP-dep_Trfase_major"/>
</dbReference>
<dbReference type="InterPro" id="IPR015422">
    <property type="entry name" value="PyrdxlP-dep_Trfase_small"/>
</dbReference>
<dbReference type="InterPro" id="IPR013440">
    <property type="entry name" value="TNase"/>
</dbReference>
<dbReference type="InterPro" id="IPR018176">
    <property type="entry name" value="Tryptophanase_CS"/>
</dbReference>
<dbReference type="NCBIfam" id="NF009709">
    <property type="entry name" value="PRK13238.1"/>
    <property type="match status" value="1"/>
</dbReference>
<dbReference type="NCBIfam" id="TIGR02617">
    <property type="entry name" value="tnaA_trp_ase"/>
    <property type="match status" value="1"/>
</dbReference>
<dbReference type="PANTHER" id="PTHR32325">
    <property type="entry name" value="BETA-ELIMINATING LYASE-LIKE PROTEIN-RELATED"/>
    <property type="match status" value="1"/>
</dbReference>
<dbReference type="PANTHER" id="PTHR32325:SF4">
    <property type="entry name" value="TRYPTOPHANASE"/>
    <property type="match status" value="1"/>
</dbReference>
<dbReference type="Pfam" id="PF01212">
    <property type="entry name" value="Beta_elim_lyase"/>
    <property type="match status" value="1"/>
</dbReference>
<dbReference type="PIRSF" id="PIRSF001386">
    <property type="entry name" value="Trpase"/>
    <property type="match status" value="1"/>
</dbReference>
<dbReference type="SUPFAM" id="SSF53383">
    <property type="entry name" value="PLP-dependent transferases"/>
    <property type="match status" value="1"/>
</dbReference>
<dbReference type="PROSITE" id="PS00853">
    <property type="entry name" value="BETA_ELIM_LYASE"/>
    <property type="match status" value="1"/>
</dbReference>
<gene>
    <name evidence="1" type="primary">tnaA</name>
    <name type="ordered locus">ECDH10B_3895</name>
</gene>
<name>TNAA_ECODH</name>
<comment type="catalytic activity">
    <reaction evidence="1">
        <text>L-tryptophan + H2O = indole + pyruvate + NH4(+)</text>
        <dbReference type="Rhea" id="RHEA:19553"/>
        <dbReference type="ChEBI" id="CHEBI:15361"/>
        <dbReference type="ChEBI" id="CHEBI:15377"/>
        <dbReference type="ChEBI" id="CHEBI:16881"/>
        <dbReference type="ChEBI" id="CHEBI:28938"/>
        <dbReference type="ChEBI" id="CHEBI:57912"/>
        <dbReference type="EC" id="4.1.99.1"/>
    </reaction>
</comment>
<comment type="cofactor">
    <cofactor evidence="1">
        <name>pyridoxal 5'-phosphate</name>
        <dbReference type="ChEBI" id="CHEBI:597326"/>
    </cofactor>
</comment>
<comment type="pathway">
    <text evidence="1">Amino-acid degradation; L-tryptophan degradation via pyruvate pathway; indole and pyruvate from L-tryptophan: step 1/1.</text>
</comment>
<comment type="subunit">
    <text evidence="1">Homotetramer.</text>
</comment>
<comment type="similarity">
    <text evidence="1">Belongs to the beta-eliminating lyase family.</text>
</comment>
<protein>
    <recommendedName>
        <fullName evidence="1">Tryptophanase</fullName>
        <ecNumber evidence="1">4.1.99.1</ecNumber>
    </recommendedName>
    <alternativeName>
        <fullName evidence="1">L-tryptophan indole-lyase</fullName>
        <shortName evidence="1">TNase</shortName>
    </alternativeName>
</protein>
<feature type="chain" id="PRO_1000128910" description="Tryptophanase">
    <location>
        <begin position="1"/>
        <end position="471"/>
    </location>
</feature>
<feature type="modified residue" description="N6-acetyllysine" evidence="1">
    <location>
        <position position="5"/>
    </location>
</feature>
<feature type="modified residue" description="N6-acetyllysine" evidence="1">
    <location>
        <position position="115"/>
    </location>
</feature>
<feature type="modified residue" description="N6-acetyllysine" evidence="1">
    <location>
        <position position="156"/>
    </location>
</feature>
<feature type="modified residue" description="N6-(pyridoxal phosphate)lysine" evidence="1">
    <location>
        <position position="270"/>
    </location>
</feature>
<feature type="modified residue" description="N6-acetyllysine" evidence="1">
    <location>
        <position position="450"/>
    </location>
</feature>
<accession>B1X9T7</accession>
<reference key="1">
    <citation type="journal article" date="2008" name="J. Bacteriol.">
        <title>The complete genome sequence of Escherichia coli DH10B: insights into the biology of a laboratory workhorse.</title>
        <authorList>
            <person name="Durfee T."/>
            <person name="Nelson R."/>
            <person name="Baldwin S."/>
            <person name="Plunkett G. III"/>
            <person name="Burland V."/>
            <person name="Mau B."/>
            <person name="Petrosino J.F."/>
            <person name="Qin X."/>
            <person name="Muzny D.M."/>
            <person name="Ayele M."/>
            <person name="Gibbs R.A."/>
            <person name="Csorgo B."/>
            <person name="Posfai G."/>
            <person name="Weinstock G.M."/>
            <person name="Blattner F.R."/>
        </authorList>
    </citation>
    <scope>NUCLEOTIDE SEQUENCE [LARGE SCALE GENOMIC DNA]</scope>
    <source>
        <strain>K12 / DH10B</strain>
    </source>
</reference>
<sequence>MENFKHLPEPFRIRVIEPVKRTTRAYREEAIIKSGMNPFLLDSEDVFIDLLTDSGTGAVTQSMQAAMMRGDEAYSGSRSYYALAESVKNIFGYQYTIPTHQGRGAEQIYIPVLIKKREQEKGLDRSKMVAFSNYFFDTTQGHSQINGCTVRNVYIKEAFDTGVRYDFKGNFDLEGLERGIEEVGPNNVPYIVATITSNSAGGQPVSLANLKAMYSIAKKYDIPVVMDSARFAENAYFIKQREAEYKDWTIEQITRETYKYADMLAMSAKKDAMVPMGGLLCMKDDSFFDVYTECRTLCVVQEGFPTYGGLEGGAMERLAVGLYDGMNLDWLAYRIAQVQYLVDGLEEIGVVCQQAGGHAAFVDAGKLLPHIPADQFPAQALACELYKVAGIRAVEIGSFLLGRDPKTGKQLPCPAELLRLTIPRATYTQTHMDFIIEAFKHVKENAANIKGLTFTYEPKVLRHFTAKLKEV</sequence>
<keyword id="KW-0007">Acetylation</keyword>
<keyword id="KW-0456">Lyase</keyword>
<keyword id="KW-0663">Pyridoxal phosphate</keyword>
<keyword id="KW-0823">Tryptophan catabolism</keyword>
<organism>
    <name type="scientific">Escherichia coli (strain K12 / DH10B)</name>
    <dbReference type="NCBI Taxonomy" id="316385"/>
    <lineage>
        <taxon>Bacteria</taxon>
        <taxon>Pseudomonadati</taxon>
        <taxon>Pseudomonadota</taxon>
        <taxon>Gammaproteobacteria</taxon>
        <taxon>Enterobacterales</taxon>
        <taxon>Enterobacteriaceae</taxon>
        <taxon>Escherichia</taxon>
    </lineage>
</organism>